<gene>
    <name type="primary">spns1</name>
    <name type="synonym">nrs</name>
    <name type="synonym">spinl</name>
</gene>
<keyword id="KW-0445">Lipid transport</keyword>
<keyword id="KW-0458">Lysosome</keyword>
<keyword id="KW-0472">Membrane</keyword>
<keyword id="KW-1185">Reference proteome</keyword>
<keyword id="KW-0812">Transmembrane</keyword>
<keyword id="KW-1133">Transmembrane helix</keyword>
<keyword id="KW-0813">Transport</keyword>
<sequence>MSQADADITPFFADDNEGEGPVENGVGSPLPEDEEEESPSGVTDRRAIMTVIVLCYINLLNYMDRFTVAGVLPDIEHFFGIGDGTSGLLQTVFICSYMFLAPLFGYLGDRYNRKLIMCVGIFFWSVVTLASSFIGKDHFWALLLTRGLVGVGEASYSTIAPTIIADLFVKEKRTNMLSIFYFAIPVGSGMGYIVGSKVDTVAKDWHWALRVTPGLGLLAVFLLMLVVQEPKRGAIEAHPEHTLHRTSWLADMKALCRNPSFILSTFGFTAVAFVTGSLALWAPAFLFRAGVFTGVKQPCFKAPCDDSDSLIFGAITVVTGILGVASGVQASKLLRTRTPRADPLVCAAGLLLAAPFLYLSIMFAQASTVATYVFIFLGETFLSMNWAIVADILLYVVIPTRRSTAEAFQIVLSHLLGDAISPYLIGVVSDSIKESNSYMWEFRSLQMSLLLCSFVAVAGGAFFLATAVFIEKDRDLAENYVPSDDAPIVVPRSGRSTKVSVSSVLI</sequence>
<accession>Q7ZU13</accession>
<accession>Q8UVB7</accession>
<reference key="1">
    <citation type="journal article" date="2002" name="Dev. Dyn.">
        <title>Zebrafish yolk-specific not really started (nrs) gene is a vertebrate homolog of the Drosophila spinster gene and is essential for embryogenesis.</title>
        <authorList>
            <person name="Young R.M."/>
            <person name="Marty S."/>
            <person name="Nakano Y."/>
            <person name="Wang H."/>
            <person name="Yamamoto D."/>
            <person name="Lin S."/>
            <person name="Allende M.L."/>
        </authorList>
    </citation>
    <scope>NUCLEOTIDE SEQUENCE [MRNA]</scope>
    <scope>FUNCTION</scope>
    <scope>TISSUE SPECIFICITY</scope>
    <scope>DEVELOPMENTAL STAGE</scope>
    <scope>DISRUPTION PHENOTYPE</scope>
</reference>
<reference key="2">
    <citation type="submission" date="2003-03" db="EMBL/GenBank/DDBJ databases">
        <authorList>
            <consortium name="NIH - Zebrafish Gene Collection (ZGC) project"/>
        </authorList>
    </citation>
    <scope>NUCLEOTIDE SEQUENCE [LARGE SCALE MRNA]</scope>
    <source>
        <strain>AB</strain>
    </source>
</reference>
<reference key="3">
    <citation type="journal article" date="2008" name="PLoS Genet.">
        <title>The identification of zebrafish mutants showing alterations in senescence-associated biomarkers.</title>
        <authorList>
            <person name="Kishi S."/>
            <person name="Bayliss P.E."/>
            <person name="Uchiyama J."/>
            <person name="Koshimizu E."/>
            <person name="Qi J."/>
            <person name="Nanjappa P."/>
            <person name="Imamura S."/>
            <person name="Islam A."/>
            <person name="Neuberg D."/>
            <person name="Amsterdam A."/>
            <person name="Roberts T.M."/>
        </authorList>
    </citation>
    <scope>DISRUPTION PHENOTYPE</scope>
    <scope>FUNCTION</scope>
</reference>
<reference key="4">
    <citation type="journal article" date="2017" name="Autophagy">
        <title>Autolysosome biogenesis and developmental senescence are regulated by both Spns1 and v-ATPase.</title>
        <authorList>
            <person name="Sasaki T."/>
            <person name="Lian S."/>
            <person name="Khan A."/>
            <person name="Llop J.R."/>
            <person name="Samuelson A.V."/>
            <person name="Chen W."/>
            <person name="Klionsky D.J."/>
            <person name="Kishi S."/>
        </authorList>
    </citation>
    <scope>FUNCTION</scope>
</reference>
<reference key="5">
    <citation type="journal article" date="2022" name="Proc. Natl. Acad. Sci. U.S.A.">
        <title>Spns1 is a lysophospholipid transporter mediating lysosomal phospholipid salvage.</title>
        <authorList>
            <person name="He M."/>
            <person name="Kuk A.C.Y."/>
            <person name="Ding M."/>
            <person name="Chin C.F."/>
            <person name="Galam D.L.A."/>
            <person name="Nah J.M."/>
            <person name="Tan B.C."/>
            <person name="Yeo H.L."/>
            <person name="Chua G.L."/>
            <person name="Benke P.I."/>
            <person name="Wenk M.R."/>
            <person name="Ho L."/>
            <person name="Torta F."/>
            <person name="Silver D.L."/>
        </authorList>
    </citation>
    <scope>FUNCTION</scope>
    <scope>TRANSPORTER ACTIVITY</scope>
</reference>
<comment type="function">
    <text evidence="5 6 7 8">Mediates the rate-limiting, proton-dependent, lysosomal efflux of lysophospholipids (PubMed:36161949). Selective for zwitterionic headgroups such as lysophosphatidylcholine (LPC) and lysophosphatidylethanolamine (LPE) (PubMed:36161949). Essential player in lysosomal homeostasis (PubMed:27875093). Critical for embryogenesis (PubMed:11836794, PubMed:18704191). Involved in the regulation of developmental senescence (PubMed:27875093).</text>
</comment>
<comment type="catalytic activity">
    <reaction evidence="2">
        <text>a 1-acyl-sn-glycero-3-phosphocholine(out) + H(+)(out) = a 1-acyl-sn-glycero-3-phosphocholine(in) + H(+)(in)</text>
        <dbReference type="Rhea" id="RHEA:74435"/>
        <dbReference type="ChEBI" id="CHEBI:15378"/>
        <dbReference type="ChEBI" id="CHEBI:58168"/>
    </reaction>
</comment>
<comment type="catalytic activity">
    <reaction evidence="2">
        <text>a 1-acyl-sn-glycero-3-phosphoethanolamine(out) + H(+)(out) = a 1-acyl-sn-glycero-3-phosphoethanolamine(in) + H(+)(in)</text>
        <dbReference type="Rhea" id="RHEA:74439"/>
        <dbReference type="ChEBI" id="CHEBI:15378"/>
        <dbReference type="ChEBI" id="CHEBI:64381"/>
    </reaction>
</comment>
<comment type="catalytic activity">
    <reaction evidence="2">
        <text>a 1-O-(1Z-alkenyl)-sn-glycero-3-phosphocholine(out) + H(+)(out) = a 1-O-(1Z-alkenyl)-sn-glycero-3-phosphocholine(in) + H(+)(in)</text>
        <dbReference type="Rhea" id="RHEA:74447"/>
        <dbReference type="ChEBI" id="CHEBI:15378"/>
        <dbReference type="ChEBI" id="CHEBI:77287"/>
    </reaction>
</comment>
<comment type="catalytic activity">
    <reaction evidence="2">
        <text>a 1-O-(1Z-alkenyl)-sn-glycero-3-phosphoethanolamine(out) + H(+)(out) = a 1-O-(1Z-alkenyl)-sn-glycero-3-phosphoethanolamine(in) + H(+)(in)</text>
        <dbReference type="Rhea" id="RHEA:74455"/>
        <dbReference type="ChEBI" id="CHEBI:15378"/>
        <dbReference type="ChEBI" id="CHEBI:77288"/>
    </reaction>
</comment>
<comment type="subcellular location">
    <subcellularLocation>
        <location evidence="1">Lysosome membrane</location>
        <topology evidence="1">Multi-pass membrane protein</topology>
    </subcellularLocation>
</comment>
<comment type="tissue specificity">
    <text evidence="5">Expressed in yolk cells.</text>
</comment>
<comment type="developmental stage">
    <text evidence="5">Expressed both maternally and zygotically throughout embryogenesis, and also in adults.</text>
</comment>
<comment type="disruption phenotype">
    <text evidence="5 6">Presence in early embryos of an opaque substance in the posterior yolk cell extension at approximately 1 day after fertilization. This material progressively accumulates and by 48 hours after fertilization fills the entire yolk. By day 3 of embryogenesis, embryos are severely reduced in size compared with their wild-type siblings and they die a few hours later.</text>
</comment>
<comment type="similarity">
    <text evidence="11">Belongs to the major facilitator superfamily. Spinster (TC 2.A.1.49) family.</text>
</comment>
<evidence type="ECO:0000250" key="1"/>
<evidence type="ECO:0000250" key="2">
    <source>
        <dbReference type="UniProtKB" id="Q9H2V7"/>
    </source>
</evidence>
<evidence type="ECO:0000255" key="3"/>
<evidence type="ECO:0000256" key="4">
    <source>
        <dbReference type="SAM" id="MobiDB-lite"/>
    </source>
</evidence>
<evidence type="ECO:0000269" key="5">
    <source>
    </source>
</evidence>
<evidence type="ECO:0000269" key="6">
    <source>
    </source>
</evidence>
<evidence type="ECO:0000269" key="7">
    <source>
    </source>
</evidence>
<evidence type="ECO:0000269" key="8">
    <source>
    </source>
</evidence>
<evidence type="ECO:0000303" key="9">
    <source>
    </source>
</evidence>
<evidence type="ECO:0000303" key="10">
    <source>
    </source>
</evidence>
<evidence type="ECO:0000305" key="11"/>
<proteinExistence type="evidence at transcript level"/>
<dbReference type="EMBL" id="AF465772">
    <property type="protein sequence ID" value="AAL69987.1"/>
    <property type="molecule type" value="mRNA"/>
</dbReference>
<dbReference type="EMBL" id="BC048024">
    <property type="protein sequence ID" value="AAH48024.1"/>
    <property type="molecule type" value="mRNA"/>
</dbReference>
<dbReference type="SMR" id="Q7ZU13"/>
<dbReference type="FunCoup" id="Q7ZU13">
    <property type="interactions" value="1460"/>
</dbReference>
<dbReference type="STRING" id="7955.ENSDARP00000009970"/>
<dbReference type="PaxDb" id="7955-ENSDARP00000009970"/>
<dbReference type="Ensembl" id="ENSDART00000183172">
    <property type="protein sequence ID" value="ENSDARP00000148387"/>
    <property type="gene ID" value="ENSDARG00000111727"/>
</dbReference>
<dbReference type="AGR" id="ZFIN:ZDB-GENE-020228-1"/>
<dbReference type="ZFIN" id="ZDB-GENE-020228-1">
    <property type="gene designation" value="spns1"/>
</dbReference>
<dbReference type="eggNOG" id="KOG1330">
    <property type="taxonomic scope" value="Eukaryota"/>
</dbReference>
<dbReference type="InParanoid" id="Q7ZU13"/>
<dbReference type="OMA" id="YICAAGL"/>
<dbReference type="OrthoDB" id="6770063at2759"/>
<dbReference type="PhylomeDB" id="Q7ZU13"/>
<dbReference type="PRO" id="PR:Q7ZU13"/>
<dbReference type="Proteomes" id="UP000000437">
    <property type="component" value="Unplaced"/>
</dbReference>
<dbReference type="Bgee" id="ENSDARG00000111727">
    <property type="expression patterns" value="Expressed in yolk syncytial layer"/>
</dbReference>
<dbReference type="GO" id="GO:0005765">
    <property type="term" value="C:lysosomal membrane"/>
    <property type="evidence" value="ECO:0007669"/>
    <property type="project" value="UniProtKB-SubCell"/>
</dbReference>
<dbReference type="GO" id="GO:0016020">
    <property type="term" value="C:membrane"/>
    <property type="evidence" value="ECO:0000318"/>
    <property type="project" value="GO_Central"/>
</dbReference>
<dbReference type="GO" id="GO:0022857">
    <property type="term" value="F:transmembrane transporter activity"/>
    <property type="evidence" value="ECO:0000318"/>
    <property type="project" value="GO_Central"/>
</dbReference>
<dbReference type="GO" id="GO:0097352">
    <property type="term" value="P:autophagosome maturation"/>
    <property type="evidence" value="ECO:0000315"/>
    <property type="project" value="ZFIN"/>
</dbReference>
<dbReference type="GO" id="GO:0006914">
    <property type="term" value="P:autophagy"/>
    <property type="evidence" value="ECO:0000316"/>
    <property type="project" value="ZFIN"/>
</dbReference>
<dbReference type="GO" id="GO:0090398">
    <property type="term" value="P:cellular senescence"/>
    <property type="evidence" value="ECO:0000315"/>
    <property type="project" value="ZFIN"/>
</dbReference>
<dbReference type="GO" id="GO:0006869">
    <property type="term" value="P:lipid transport"/>
    <property type="evidence" value="ECO:0007669"/>
    <property type="project" value="UniProtKB-KW"/>
</dbReference>
<dbReference type="CDD" id="cd17328">
    <property type="entry name" value="MFS_spinster_like"/>
    <property type="match status" value="1"/>
</dbReference>
<dbReference type="Gene3D" id="1.20.1250.20">
    <property type="entry name" value="MFS general substrate transporter like domains"/>
    <property type="match status" value="1"/>
</dbReference>
<dbReference type="InterPro" id="IPR011701">
    <property type="entry name" value="MFS"/>
</dbReference>
<dbReference type="InterPro" id="IPR020846">
    <property type="entry name" value="MFS_dom"/>
</dbReference>
<dbReference type="InterPro" id="IPR044770">
    <property type="entry name" value="MFS_spinster-like"/>
</dbReference>
<dbReference type="InterPro" id="IPR036259">
    <property type="entry name" value="MFS_trans_sf"/>
</dbReference>
<dbReference type="PANTHER" id="PTHR23505:SF13">
    <property type="entry name" value="PROTEIN SPINSTER HOMOLOG 1"/>
    <property type="match status" value="1"/>
</dbReference>
<dbReference type="PANTHER" id="PTHR23505">
    <property type="entry name" value="SPINSTER"/>
    <property type="match status" value="1"/>
</dbReference>
<dbReference type="Pfam" id="PF07690">
    <property type="entry name" value="MFS_1"/>
    <property type="match status" value="1"/>
</dbReference>
<dbReference type="SUPFAM" id="SSF103473">
    <property type="entry name" value="MFS general substrate transporter"/>
    <property type="match status" value="1"/>
</dbReference>
<dbReference type="PROSITE" id="PS50850">
    <property type="entry name" value="MFS"/>
    <property type="match status" value="1"/>
</dbReference>
<feature type="chain" id="PRO_0000305041" description="Protein spinster homolog 1">
    <location>
        <begin position="1"/>
        <end position="506"/>
    </location>
</feature>
<feature type="transmembrane region" description="Helical" evidence="3">
    <location>
        <begin position="52"/>
        <end position="71"/>
    </location>
</feature>
<feature type="transmembrane region" description="Helical" evidence="3">
    <location>
        <begin position="87"/>
        <end position="107"/>
    </location>
</feature>
<feature type="transmembrane region" description="Helical" evidence="3">
    <location>
        <begin position="115"/>
        <end position="135"/>
    </location>
</feature>
<feature type="transmembrane region" description="Helical" evidence="3">
    <location>
        <begin position="149"/>
        <end position="169"/>
    </location>
</feature>
<feature type="transmembrane region" description="Helical" evidence="3">
    <location>
        <begin position="176"/>
        <end position="196"/>
    </location>
</feature>
<feature type="transmembrane region" description="Helical" evidence="3">
    <location>
        <begin position="207"/>
        <end position="227"/>
    </location>
</feature>
<feature type="transmembrane region" description="Helical" evidence="3">
    <location>
        <begin position="266"/>
        <end position="286"/>
    </location>
</feature>
<feature type="transmembrane region" description="Helical" evidence="3">
    <location>
        <begin position="310"/>
        <end position="330"/>
    </location>
</feature>
<feature type="transmembrane region" description="Helical" evidence="3">
    <location>
        <begin position="344"/>
        <end position="364"/>
    </location>
</feature>
<feature type="transmembrane region" description="Helical" evidence="3">
    <location>
        <begin position="373"/>
        <end position="393"/>
    </location>
</feature>
<feature type="transmembrane region" description="Helical" evidence="3">
    <location>
        <begin position="408"/>
        <end position="428"/>
    </location>
</feature>
<feature type="transmembrane region" description="Helical" evidence="3">
    <location>
        <begin position="450"/>
        <end position="470"/>
    </location>
</feature>
<feature type="region of interest" description="Disordered" evidence="4">
    <location>
        <begin position="1"/>
        <end position="42"/>
    </location>
</feature>
<feature type="compositionally biased region" description="Low complexity" evidence="4">
    <location>
        <begin position="21"/>
        <end position="30"/>
    </location>
</feature>
<feature type="sequence conflict" description="In Ref. 1; AAL69987." evidence="11" ref="1">
    <original>M</original>
    <variation>I</variation>
    <location>
        <position position="362"/>
    </location>
</feature>
<organism>
    <name type="scientific">Danio rerio</name>
    <name type="common">Zebrafish</name>
    <name type="synonym">Brachydanio rerio</name>
    <dbReference type="NCBI Taxonomy" id="7955"/>
    <lineage>
        <taxon>Eukaryota</taxon>
        <taxon>Metazoa</taxon>
        <taxon>Chordata</taxon>
        <taxon>Craniata</taxon>
        <taxon>Vertebrata</taxon>
        <taxon>Euteleostomi</taxon>
        <taxon>Actinopterygii</taxon>
        <taxon>Neopterygii</taxon>
        <taxon>Teleostei</taxon>
        <taxon>Ostariophysi</taxon>
        <taxon>Cypriniformes</taxon>
        <taxon>Danionidae</taxon>
        <taxon>Danioninae</taxon>
        <taxon>Danio</taxon>
    </lineage>
</organism>
<protein>
    <recommendedName>
        <fullName>Protein spinster homolog 1</fullName>
    </recommendedName>
    <alternativeName>
        <fullName>Protein not really started</fullName>
    </alternativeName>
    <alternativeName>
        <fullName>Spinster-like protein</fullName>
    </alternativeName>
    <alternativeName>
        <fullName evidence="9 10">Spns1</fullName>
    </alternativeName>
</protein>
<name>SPNS1_DANRE</name>